<comment type="function">
    <text evidence="1">PPIases accelerate the folding of proteins. It catalyzes the cis-trans isomerization of proline imidic peptide bonds in oligopeptides (By similarity).</text>
</comment>
<comment type="catalytic activity">
    <reaction>
        <text>[protein]-peptidylproline (omega=180) = [protein]-peptidylproline (omega=0)</text>
        <dbReference type="Rhea" id="RHEA:16237"/>
        <dbReference type="Rhea" id="RHEA-COMP:10747"/>
        <dbReference type="Rhea" id="RHEA-COMP:10748"/>
        <dbReference type="ChEBI" id="CHEBI:83833"/>
        <dbReference type="ChEBI" id="CHEBI:83834"/>
        <dbReference type="EC" id="5.2.1.8"/>
    </reaction>
</comment>
<comment type="subcellular location">
    <subcellularLocation>
        <location evidence="1">Nucleus</location>
    </subcellularLocation>
</comment>
<comment type="similarity">
    <text evidence="5">Belongs to the cyclophilin-type PPIase family. PPIL4 subfamily.</text>
</comment>
<comment type="sequence caution" evidence="5">
    <conflict type="erroneous initiation">
        <sequence resource="EMBL-CDS" id="EAL23123"/>
    </conflict>
    <text>Truncated N-terminus.</text>
</comment>
<feature type="chain" id="PRO_0000410204" description="Peptidyl-prolyl cis-trans isomerase-like 4">
    <location>
        <begin position="1"/>
        <end position="504"/>
    </location>
</feature>
<feature type="domain" description="PPIase cyclophilin-type" evidence="2">
    <location>
        <begin position="1"/>
        <end position="169"/>
    </location>
</feature>
<feature type="domain" description="RRM" evidence="3">
    <location>
        <begin position="246"/>
        <end position="324"/>
    </location>
</feature>
<feature type="region of interest" description="Disordered" evidence="4">
    <location>
        <begin position="330"/>
        <end position="504"/>
    </location>
</feature>
<feature type="compositionally biased region" description="Polar residues" evidence="4">
    <location>
        <begin position="330"/>
        <end position="339"/>
    </location>
</feature>
<feature type="compositionally biased region" description="Gly residues" evidence="4">
    <location>
        <begin position="340"/>
        <end position="354"/>
    </location>
</feature>
<feature type="compositionally biased region" description="Basic and acidic residues" evidence="4">
    <location>
        <begin position="356"/>
        <end position="381"/>
    </location>
</feature>
<feature type="compositionally biased region" description="Basic and acidic residues" evidence="4">
    <location>
        <begin position="416"/>
        <end position="504"/>
    </location>
</feature>
<reference key="1">
    <citation type="journal article" date="2005" name="Science">
        <title>The genome of the basidiomycetous yeast and human pathogen Cryptococcus neoformans.</title>
        <authorList>
            <person name="Loftus B.J."/>
            <person name="Fung E."/>
            <person name="Roncaglia P."/>
            <person name="Rowley D."/>
            <person name="Amedeo P."/>
            <person name="Bruno D."/>
            <person name="Vamathevan J."/>
            <person name="Miranda M."/>
            <person name="Anderson I.J."/>
            <person name="Fraser J.A."/>
            <person name="Allen J.E."/>
            <person name="Bosdet I.E."/>
            <person name="Brent M.R."/>
            <person name="Chiu R."/>
            <person name="Doering T.L."/>
            <person name="Donlin M.J."/>
            <person name="D'Souza C.A."/>
            <person name="Fox D.S."/>
            <person name="Grinberg V."/>
            <person name="Fu J."/>
            <person name="Fukushima M."/>
            <person name="Haas B.J."/>
            <person name="Huang J.C."/>
            <person name="Janbon G."/>
            <person name="Jones S.J.M."/>
            <person name="Koo H.L."/>
            <person name="Krzywinski M.I."/>
            <person name="Kwon-Chung K.J."/>
            <person name="Lengeler K.B."/>
            <person name="Maiti R."/>
            <person name="Marra M.A."/>
            <person name="Marra R.E."/>
            <person name="Mathewson C.A."/>
            <person name="Mitchell T.G."/>
            <person name="Pertea M."/>
            <person name="Riggs F.R."/>
            <person name="Salzberg S.L."/>
            <person name="Schein J.E."/>
            <person name="Shvartsbeyn A."/>
            <person name="Shin H."/>
            <person name="Shumway M."/>
            <person name="Specht C.A."/>
            <person name="Suh B.B."/>
            <person name="Tenney A."/>
            <person name="Utterback T.R."/>
            <person name="Wickes B.L."/>
            <person name="Wortman J.R."/>
            <person name="Wye N.H."/>
            <person name="Kronstad J.W."/>
            <person name="Lodge J.K."/>
            <person name="Heitman J."/>
            <person name="Davis R.W."/>
            <person name="Fraser C.M."/>
            <person name="Hyman R.W."/>
        </authorList>
    </citation>
    <scope>NUCLEOTIDE SEQUENCE [LARGE SCALE GENOMIC DNA]</scope>
    <source>
        <strain>B-3501A</strain>
    </source>
</reference>
<accession>P0CP89</accession>
<accession>Q55ZM2</accession>
<accession>Q5KNY5</accession>
<proteinExistence type="inferred from homology"/>
<gene>
    <name type="primary">CYP6</name>
    <name type="ordered locus">CNBA4680</name>
</gene>
<dbReference type="EC" id="5.2.1.8"/>
<dbReference type="EMBL" id="AAEY01000003">
    <property type="protein sequence ID" value="EAL23123.1"/>
    <property type="status" value="ALT_INIT"/>
    <property type="molecule type" value="Genomic_DNA"/>
</dbReference>
<dbReference type="RefSeq" id="XP_777770.1">
    <property type="nucleotide sequence ID" value="XM_772677.1"/>
</dbReference>
<dbReference type="SMR" id="P0CP89"/>
<dbReference type="EnsemblFungi" id="AAW41108">
    <property type="protein sequence ID" value="AAW41108"/>
    <property type="gene ID" value="CNA04870"/>
</dbReference>
<dbReference type="GeneID" id="4933730"/>
<dbReference type="KEGG" id="cnb:CNBA4680"/>
<dbReference type="HOGENOM" id="CLU_018791_2_1_1"/>
<dbReference type="OrthoDB" id="8568at5206"/>
<dbReference type="GO" id="GO:0005634">
    <property type="term" value="C:nucleus"/>
    <property type="evidence" value="ECO:0007669"/>
    <property type="project" value="UniProtKB-SubCell"/>
</dbReference>
<dbReference type="GO" id="GO:0003755">
    <property type="term" value="F:peptidyl-prolyl cis-trans isomerase activity"/>
    <property type="evidence" value="ECO:0007669"/>
    <property type="project" value="UniProtKB-KW"/>
</dbReference>
<dbReference type="GO" id="GO:0003723">
    <property type="term" value="F:RNA binding"/>
    <property type="evidence" value="ECO:0007669"/>
    <property type="project" value="UniProtKB-KW"/>
</dbReference>
<dbReference type="CDD" id="cd01921">
    <property type="entry name" value="cyclophilin_RRM"/>
    <property type="match status" value="1"/>
</dbReference>
<dbReference type="CDD" id="cd12235">
    <property type="entry name" value="RRM_PPIL4"/>
    <property type="match status" value="1"/>
</dbReference>
<dbReference type="FunFam" id="2.40.100.10:FF:000015">
    <property type="entry name" value="Peptidyl-prolyl cis-trans isomerase"/>
    <property type="match status" value="1"/>
</dbReference>
<dbReference type="FunFam" id="3.30.70.330:FF:001637">
    <property type="entry name" value="Peptidyl-prolyl cis-trans isomerase-like 4"/>
    <property type="match status" value="1"/>
</dbReference>
<dbReference type="Gene3D" id="3.30.70.330">
    <property type="match status" value="1"/>
</dbReference>
<dbReference type="Gene3D" id="2.40.100.10">
    <property type="entry name" value="Cyclophilin-like"/>
    <property type="match status" value="1"/>
</dbReference>
<dbReference type="InterPro" id="IPR035542">
    <property type="entry name" value="CRIP"/>
</dbReference>
<dbReference type="InterPro" id="IPR029000">
    <property type="entry name" value="Cyclophilin-like_dom_sf"/>
</dbReference>
<dbReference type="InterPro" id="IPR002130">
    <property type="entry name" value="Cyclophilin-type_PPIase_dom"/>
</dbReference>
<dbReference type="InterPro" id="IPR035538">
    <property type="entry name" value="Cyclophilin_PPIL4"/>
</dbReference>
<dbReference type="InterPro" id="IPR012677">
    <property type="entry name" value="Nucleotide-bd_a/b_plait_sf"/>
</dbReference>
<dbReference type="InterPro" id="IPR035979">
    <property type="entry name" value="RBD_domain_sf"/>
</dbReference>
<dbReference type="InterPro" id="IPR000504">
    <property type="entry name" value="RRM_dom"/>
</dbReference>
<dbReference type="PANTHER" id="PTHR45843">
    <property type="entry name" value="PEPTIDYL-PROLYL CIS-TRANS ISOMERASE-LIKE 4"/>
    <property type="match status" value="1"/>
</dbReference>
<dbReference type="PANTHER" id="PTHR45843:SF1">
    <property type="entry name" value="PEPTIDYL-PROLYL CIS-TRANS ISOMERASE-LIKE 4"/>
    <property type="match status" value="1"/>
</dbReference>
<dbReference type="Pfam" id="PF00160">
    <property type="entry name" value="Pro_isomerase"/>
    <property type="match status" value="1"/>
</dbReference>
<dbReference type="Pfam" id="PF00076">
    <property type="entry name" value="RRM_1"/>
    <property type="match status" value="1"/>
</dbReference>
<dbReference type="PRINTS" id="PR00153">
    <property type="entry name" value="CSAPPISMRASE"/>
</dbReference>
<dbReference type="SMART" id="SM00360">
    <property type="entry name" value="RRM"/>
    <property type="match status" value="1"/>
</dbReference>
<dbReference type="SUPFAM" id="SSF50891">
    <property type="entry name" value="Cyclophilin-like"/>
    <property type="match status" value="1"/>
</dbReference>
<dbReference type="SUPFAM" id="SSF54928">
    <property type="entry name" value="RNA-binding domain, RBD"/>
    <property type="match status" value="1"/>
</dbReference>
<dbReference type="PROSITE" id="PS50072">
    <property type="entry name" value="CSA_PPIASE_2"/>
    <property type="match status" value="1"/>
</dbReference>
<dbReference type="PROSITE" id="PS50102">
    <property type="entry name" value="RRM"/>
    <property type="match status" value="1"/>
</dbReference>
<sequence>MSVMLETSLGDLIIDLEVDKCPRTCENFIKLCKLKYYALNAFFNVSKNFIAQSGDPTATGTGGESLASYVYSQSPSGPRPPRYFTPEILNSLKHTHKGTLSMAVAPINPPGCGSQFFITLADNIDYLDGKHAVFGHVIEGLDTLDKINDAFTDKEGRPLQNIRIRHVEILEDPFPDPDNFMPIPQSPIRPPDDLSKVRIADTEDPNAVIPEEEAEELRRRTEAASSALTLEMIGDLPFAAVRPPENILFVCKLNPVTQDEDLELIFSRFGKILSCEVVRDKKSGDSLQYAFIEFDEREAAEQAYFKMQNVLVDDRRIWVDFSQSVAKMNRSMLSSSNPTGRGGRGGRGGRGGNYSGRRDGDRDRDRDSGWSSRRDAPDSRRPPPPPVPMSSSRDVGGTEGYGLVFDDRSAPSSRGSKRDRERSPKRERDRERERDRSPRRDRDRERDRSPRRDRDRERDDHDRRDRDRNGRDRERNGDRERYRERSRERENERYRERDDRDRRR</sequence>
<name>PPIL4_CRYNB</name>
<keyword id="KW-0413">Isomerase</keyword>
<keyword id="KW-0539">Nucleus</keyword>
<keyword id="KW-0694">RNA-binding</keyword>
<keyword id="KW-0697">Rotamase</keyword>
<protein>
    <recommendedName>
        <fullName>Peptidyl-prolyl cis-trans isomerase-like 4</fullName>
        <shortName>PPIase</shortName>
        <ecNumber>5.2.1.8</ecNumber>
    </recommendedName>
    <alternativeName>
        <fullName>Rotamase</fullName>
    </alternativeName>
</protein>
<organism>
    <name type="scientific">Cryptococcus neoformans var. neoformans serotype D (strain B-3501A)</name>
    <name type="common">Filobasidiella neoformans</name>
    <dbReference type="NCBI Taxonomy" id="283643"/>
    <lineage>
        <taxon>Eukaryota</taxon>
        <taxon>Fungi</taxon>
        <taxon>Dikarya</taxon>
        <taxon>Basidiomycota</taxon>
        <taxon>Agaricomycotina</taxon>
        <taxon>Tremellomycetes</taxon>
        <taxon>Tremellales</taxon>
        <taxon>Cryptococcaceae</taxon>
        <taxon>Cryptococcus</taxon>
        <taxon>Cryptococcus neoformans species complex</taxon>
    </lineage>
</organism>
<evidence type="ECO:0000250" key="1"/>
<evidence type="ECO:0000255" key="2">
    <source>
        <dbReference type="PROSITE-ProRule" id="PRU00156"/>
    </source>
</evidence>
<evidence type="ECO:0000255" key="3">
    <source>
        <dbReference type="PROSITE-ProRule" id="PRU00176"/>
    </source>
</evidence>
<evidence type="ECO:0000256" key="4">
    <source>
        <dbReference type="SAM" id="MobiDB-lite"/>
    </source>
</evidence>
<evidence type="ECO:0000305" key="5"/>